<protein>
    <recommendedName>
        <fullName evidence="5">Pre-neck appendage protein</fullName>
    </recommendedName>
    <alternativeName>
        <fullName evidence="5">Gene product 12</fullName>
        <shortName evidence="5">gp12</shortName>
    </alternativeName>
    <alternativeName>
        <fullName evidence="4">NP1</fullName>
    </alternativeName>
    <alternativeName>
        <fullName evidence="5">Protein p12</fullName>
    </alternativeName>
    <component>
        <recommendedName>
            <fullName>gp12*</fullName>
        </recommendedName>
    </component>
</protein>
<accession>P20345</accession>
<accession>B3VMP8</accession>
<feature type="chain" id="PRO_0000106592" description="Pre-neck appendage protein">
    <location>
        <begin position="1"/>
        <end position="854"/>
    </location>
</feature>
<feature type="chain" id="PRO_0000432876" description="gp12*">
    <location>
        <begin position="1"/>
        <end position="691"/>
    </location>
</feature>
<feature type="active site" description="Nucleophile" evidence="2">
    <location>
        <position position="695"/>
    </location>
</feature>
<feature type="binding site" evidence="2 13">
    <location>
        <position position="285"/>
    </location>
    <ligand>
        <name>Mg(2+)</name>
        <dbReference type="ChEBI" id="CHEBI:18420"/>
    </ligand>
</feature>
<feature type="binding site" evidence="2 13">
    <location>
        <position position="310"/>
    </location>
    <ligand>
        <name>Mg(2+)</name>
        <dbReference type="ChEBI" id="CHEBI:18420"/>
    </ligand>
</feature>
<feature type="binding site" evidence="2 13">
    <location>
        <position position="312"/>
    </location>
    <ligand>
        <name>Mg(2+)</name>
        <dbReference type="ChEBI" id="CHEBI:18420"/>
    </ligand>
</feature>
<feature type="binding site" evidence="12 13">
    <location>
        <begin position="746"/>
        <end position="795"/>
    </location>
    <ligand>
        <name>ATP</name>
        <dbReference type="ChEBI" id="CHEBI:30616"/>
    </ligand>
</feature>
<feature type="site" description="Cleavage" evidence="2">
    <location>
        <begin position="691"/>
        <end position="692"/>
    </location>
</feature>
<feature type="mutagenesis site" description="Complete loss of autocleavage. No effect on trimerization or enzymatic teichoic acid degrading activity." evidence="2">
    <original>E</original>
    <variation>Q</variation>
    <location>
        <position position="695"/>
    </location>
</feature>
<feature type="sequence conflict" description="In Ref. 2; ACE96035." evidence="5" ref="2">
    <original>Q</original>
    <variation>E</variation>
    <location>
        <position position="181"/>
    </location>
</feature>
<feature type="sequence conflict" description="In Ref. 2; ACE96035." evidence="5" ref="2">
    <original>D</original>
    <variation>A</variation>
    <location>
        <position position="372"/>
    </location>
</feature>
<feature type="sequence conflict" description="In Ref. 2; ACE96035." evidence="5" ref="2">
    <original>G</original>
    <variation>V</variation>
    <location>
        <position position="449"/>
    </location>
</feature>
<feature type="sequence conflict" description="In Ref. 2; ACE96035." evidence="5" ref="2">
    <original>D</original>
    <variation>E</variation>
    <location>
        <position position="457"/>
    </location>
</feature>
<feature type="sequence conflict" description="In Ref. 2; ACE96035." evidence="5" ref="2">
    <original>A</original>
    <variation>V</variation>
    <location>
        <position position="535"/>
    </location>
</feature>
<feature type="sequence conflict" description="In Ref. 2; ACE96035." evidence="5" ref="2">
    <original>Q</original>
    <variation>K</variation>
    <location>
        <position position="627"/>
    </location>
</feature>
<feature type="sequence conflict" description="In Ref. 2; ACE96035." evidence="5" ref="2">
    <original>S</original>
    <variation>N</variation>
    <location>
        <position position="777"/>
    </location>
</feature>
<feature type="helix" evidence="14">
    <location>
        <begin position="89"/>
        <end position="100"/>
    </location>
</feature>
<feature type="strand" evidence="14">
    <location>
        <begin position="102"/>
        <end position="106"/>
    </location>
</feature>
<feature type="helix" evidence="14">
    <location>
        <begin position="107"/>
        <end position="110"/>
    </location>
</feature>
<feature type="strand" evidence="14">
    <location>
        <begin position="115"/>
        <end position="119"/>
    </location>
</feature>
<feature type="helix" evidence="14">
    <location>
        <begin position="121"/>
        <end position="129"/>
    </location>
</feature>
<feature type="strand" evidence="14">
    <location>
        <begin position="134"/>
        <end position="136"/>
    </location>
</feature>
<feature type="strand" evidence="14">
    <location>
        <begin position="138"/>
        <end position="145"/>
    </location>
</feature>
<feature type="strand" evidence="14">
    <location>
        <begin position="147"/>
        <end position="149"/>
    </location>
</feature>
<feature type="strand" evidence="14">
    <location>
        <begin position="151"/>
        <end position="158"/>
    </location>
</feature>
<feature type="turn" evidence="14">
    <location>
        <begin position="160"/>
        <end position="162"/>
    </location>
</feature>
<feature type="strand" evidence="14">
    <location>
        <begin position="163"/>
        <end position="167"/>
    </location>
</feature>
<feature type="strand" evidence="14">
    <location>
        <begin position="177"/>
        <end position="181"/>
    </location>
</feature>
<feature type="turn" evidence="14">
    <location>
        <begin position="183"/>
        <end position="185"/>
    </location>
</feature>
<feature type="strand" evidence="14">
    <location>
        <begin position="188"/>
        <end position="198"/>
    </location>
</feature>
<feature type="helix" evidence="14">
    <location>
        <begin position="201"/>
        <end position="204"/>
    </location>
</feature>
<feature type="turn" evidence="14">
    <location>
        <begin position="213"/>
        <end position="216"/>
    </location>
</feature>
<feature type="strand" evidence="14">
    <location>
        <begin position="218"/>
        <end position="223"/>
    </location>
</feature>
<feature type="strand" evidence="14">
    <location>
        <begin position="225"/>
        <end position="236"/>
    </location>
</feature>
<feature type="strand" evidence="14">
    <location>
        <begin position="241"/>
        <end position="245"/>
    </location>
</feature>
<feature type="strand" evidence="14">
    <location>
        <begin position="247"/>
        <end position="250"/>
    </location>
</feature>
<feature type="strand" evidence="14">
    <location>
        <begin position="265"/>
        <end position="271"/>
    </location>
</feature>
<feature type="strand" evidence="14">
    <location>
        <begin position="273"/>
        <end position="276"/>
    </location>
</feature>
<feature type="strand" evidence="14">
    <location>
        <begin position="281"/>
        <end position="284"/>
    </location>
</feature>
<feature type="strand" evidence="14">
    <location>
        <begin position="288"/>
        <end position="294"/>
    </location>
</feature>
<feature type="strand" evidence="14">
    <location>
        <begin position="296"/>
        <end position="298"/>
    </location>
</feature>
<feature type="strand" evidence="15">
    <location>
        <begin position="301"/>
        <end position="305"/>
    </location>
</feature>
<feature type="strand" evidence="14">
    <location>
        <begin position="308"/>
        <end position="311"/>
    </location>
</feature>
<feature type="strand" evidence="14">
    <location>
        <begin position="316"/>
        <end position="336"/>
    </location>
</feature>
<feature type="strand" evidence="14">
    <location>
        <begin position="344"/>
        <end position="355"/>
    </location>
</feature>
<feature type="strand" evidence="14">
    <location>
        <begin position="357"/>
        <end position="364"/>
    </location>
</feature>
<feature type="strand" evidence="18">
    <location>
        <begin position="369"/>
        <end position="372"/>
    </location>
</feature>
<feature type="strand" evidence="14">
    <location>
        <begin position="379"/>
        <end position="390"/>
    </location>
</feature>
<feature type="helix" evidence="14">
    <location>
        <begin position="397"/>
        <end position="400"/>
    </location>
</feature>
<feature type="strand" evidence="14">
    <location>
        <begin position="404"/>
        <end position="410"/>
    </location>
</feature>
<feature type="strand" evidence="14">
    <location>
        <begin position="412"/>
        <end position="422"/>
    </location>
</feature>
<feature type="strand" evidence="14">
    <location>
        <begin position="431"/>
        <end position="437"/>
    </location>
</feature>
<feature type="strand" evidence="14">
    <location>
        <begin position="441"/>
        <end position="452"/>
    </location>
</feature>
<feature type="strand" evidence="14">
    <location>
        <begin position="457"/>
        <end position="462"/>
    </location>
</feature>
<feature type="strand" evidence="14">
    <location>
        <begin position="472"/>
        <end position="481"/>
    </location>
</feature>
<feature type="strand" evidence="14">
    <location>
        <begin position="484"/>
        <end position="489"/>
    </location>
</feature>
<feature type="strand" evidence="14">
    <location>
        <begin position="496"/>
        <end position="504"/>
    </location>
</feature>
<feature type="strand" evidence="14">
    <location>
        <begin position="508"/>
        <end position="510"/>
    </location>
</feature>
<feature type="strand" evidence="14">
    <location>
        <begin position="513"/>
        <end position="520"/>
    </location>
</feature>
<feature type="strand" evidence="14">
    <location>
        <begin position="523"/>
        <end position="531"/>
    </location>
</feature>
<feature type="strand" evidence="14">
    <location>
        <begin position="533"/>
        <end position="538"/>
    </location>
</feature>
<feature type="strand" evidence="14">
    <location>
        <begin position="541"/>
        <end position="543"/>
    </location>
</feature>
<feature type="strand" evidence="14">
    <location>
        <begin position="552"/>
        <end position="557"/>
    </location>
</feature>
<feature type="strand" evidence="18">
    <location>
        <begin position="561"/>
        <end position="564"/>
    </location>
</feature>
<feature type="strand" evidence="14">
    <location>
        <begin position="568"/>
        <end position="572"/>
    </location>
</feature>
<feature type="strand" evidence="18">
    <location>
        <begin position="574"/>
        <end position="579"/>
    </location>
</feature>
<feature type="strand" evidence="14">
    <location>
        <begin position="584"/>
        <end position="588"/>
    </location>
</feature>
<feature type="strand" evidence="14">
    <location>
        <begin position="597"/>
        <end position="603"/>
    </location>
</feature>
<feature type="strand" evidence="14">
    <location>
        <begin position="611"/>
        <end position="618"/>
    </location>
</feature>
<feature type="strand" evidence="14">
    <location>
        <begin position="620"/>
        <end position="624"/>
    </location>
</feature>
<feature type="strand" evidence="14">
    <location>
        <begin position="630"/>
        <end position="639"/>
    </location>
</feature>
<feature type="strand" evidence="14">
    <location>
        <begin position="645"/>
        <end position="651"/>
    </location>
</feature>
<feature type="strand" evidence="14">
    <location>
        <begin position="659"/>
        <end position="672"/>
    </location>
</feature>
<feature type="turn" evidence="14">
    <location>
        <begin position="673"/>
        <end position="676"/>
    </location>
</feature>
<feature type="strand" evidence="14">
    <location>
        <begin position="677"/>
        <end position="682"/>
    </location>
</feature>
<feature type="strand" evidence="16">
    <location>
        <begin position="693"/>
        <end position="699"/>
    </location>
</feature>
<feature type="helix" evidence="18">
    <location>
        <begin position="700"/>
        <end position="702"/>
    </location>
</feature>
<feature type="strand" evidence="16">
    <location>
        <begin position="710"/>
        <end position="714"/>
    </location>
</feature>
<feature type="strand" evidence="16">
    <location>
        <begin position="717"/>
        <end position="720"/>
    </location>
</feature>
<feature type="strand" evidence="17">
    <location>
        <begin position="723"/>
        <end position="725"/>
    </location>
</feature>
<feature type="strand" evidence="16">
    <location>
        <begin position="729"/>
        <end position="731"/>
    </location>
</feature>
<feature type="strand" evidence="16">
    <location>
        <begin position="736"/>
        <end position="739"/>
    </location>
</feature>
<feature type="strand" evidence="16">
    <location>
        <begin position="748"/>
        <end position="750"/>
    </location>
</feature>
<feature type="strand" evidence="16">
    <location>
        <begin position="760"/>
        <end position="764"/>
    </location>
</feature>
<feature type="strand" evidence="18">
    <location>
        <begin position="766"/>
        <end position="768"/>
    </location>
</feature>
<feature type="strand" evidence="16">
    <location>
        <begin position="770"/>
        <end position="774"/>
    </location>
</feature>
<feature type="strand" evidence="16">
    <location>
        <begin position="782"/>
        <end position="784"/>
    </location>
</feature>
<feature type="helix" evidence="16">
    <location>
        <begin position="789"/>
        <end position="791"/>
    </location>
</feature>
<feature type="strand" evidence="16">
    <location>
        <begin position="795"/>
        <end position="808"/>
    </location>
</feature>
<feature type="strand" evidence="16">
    <location>
        <begin position="816"/>
        <end position="821"/>
    </location>
</feature>
<feature type="strand" evidence="16">
    <location>
        <begin position="824"/>
        <end position="838"/>
    </location>
</feature>
<feature type="turn" evidence="16">
    <location>
        <begin position="842"/>
        <end position="844"/>
    </location>
</feature>
<feature type="strand" evidence="16">
    <location>
        <begin position="847"/>
        <end position="853"/>
    </location>
</feature>
<comment type="function">
    <text evidence="3">Structural component of the 12 appendages that hang from the lower collar. Adhesion protein that binds to the host cell surface during virus attachment and mediates teichoic acids degradation.</text>
</comment>
<comment type="cofactor">
    <cofactor evidence="2">
        <name>Mg(2+)</name>
        <dbReference type="ChEBI" id="CHEBI:18420"/>
    </cofactor>
    <text evidence="2">Binds 1 zinc ion per subunit.</text>
</comment>
<comment type="subunit">
    <text evidence="2">Homotrimer. Each appendage is a homotrimer of gp12*.</text>
</comment>
<comment type="subcellular location">
    <subcellularLocation>
        <location evidence="1 2">Virion</location>
    </subcellularLocation>
    <text evidence="6">Present in 36 copies in the virion.</text>
</comment>
<comment type="domain">
    <text evidence="2">The N-terminus has three domains that function to attach the appendages to the phage, digest the cell wall teichoic acids, and bind irreversibly to the host. The C-terminus is an autochaperone that aids trimerization.</text>
</comment>
<comment type="PTM">
    <text evidence="2">Autocleaved to produce the 74 kDa gp12* assembly attached to the phage particles. Autocleavage of the C-terminus is a posttrimerization event that is followed by an ATP-dependent release.</text>
</comment>
<organism>
    <name type="scientific">Bacillus phage phi29</name>
    <name type="common">Bacteriophage phi-29</name>
    <dbReference type="NCBI Taxonomy" id="2884424"/>
    <lineage>
        <taxon>Viruses</taxon>
        <taxon>Duplodnaviria</taxon>
        <taxon>Heunggongvirae</taxon>
        <taxon>Uroviricota</taxon>
        <taxon>Caudoviricetes</taxon>
        <taxon>Salasmaviridae</taxon>
        <taxon>Picovirinae</taxon>
        <taxon>Salasvirus</taxon>
        <taxon>Salasvirus phi29</taxon>
    </lineage>
</organism>
<dbReference type="EMBL" id="M14782">
    <property type="protein sequence ID" value="AAA32285.1"/>
    <property type="molecule type" value="Genomic_DNA"/>
</dbReference>
<dbReference type="EMBL" id="EU771092">
    <property type="protein sequence ID" value="ACE96035.1"/>
    <property type="molecule type" value="Genomic_DNA"/>
</dbReference>
<dbReference type="PIR" id="G25816">
    <property type="entry name" value="WMBP22"/>
</dbReference>
<dbReference type="PDB" id="3GQ7">
    <property type="method" value="X-ray"/>
    <property type="resolution" value="2.05 A"/>
    <property type="chains" value="A=89-691"/>
</dbReference>
<dbReference type="PDB" id="3GQ8">
    <property type="method" value="X-ray"/>
    <property type="resolution" value="2.00 A"/>
    <property type="chains" value="A=89-691"/>
</dbReference>
<dbReference type="PDB" id="3GQ9">
    <property type="method" value="X-ray"/>
    <property type="resolution" value="2.00 A"/>
    <property type="chains" value="A=89-691"/>
</dbReference>
<dbReference type="PDB" id="3GQA">
    <property type="method" value="X-ray"/>
    <property type="resolution" value="2.10 A"/>
    <property type="chains" value="A=89-691"/>
</dbReference>
<dbReference type="PDB" id="3GQH">
    <property type="method" value="X-ray"/>
    <property type="resolution" value="1.80 A"/>
    <property type="chains" value="A/B/C=692-854"/>
</dbReference>
<dbReference type="PDB" id="3GQK">
    <property type="method" value="X-ray"/>
    <property type="resolution" value="2.50 A"/>
    <property type="chains" value="A=692-854"/>
</dbReference>
<dbReference type="PDB" id="3SUC">
    <property type="method" value="X-ray"/>
    <property type="resolution" value="2.15 A"/>
    <property type="chains" value="A=89-854"/>
</dbReference>
<dbReference type="PDB" id="6QZ9">
    <property type="method" value="EM"/>
    <property type="resolution" value="3.30 A"/>
    <property type="chains" value="A/B/C/D/E/F/G/H/I/J/K/L/M/N/O/P/Q/R/S/T/U/V/W/X/Y/Z/a/b/c/d=1-854"/>
</dbReference>
<dbReference type="PDB" id="6QZF">
    <property type="method" value="EM"/>
    <property type="resolution" value="3.80 A"/>
    <property type="chains" value="A/B/C/D/E/F/G/H/I/J/K/L/M/N/O/P/Q/R/S/T/U/V/W/X/Y/Z/a/b/c/d=1-854"/>
</dbReference>
<dbReference type="PDBsum" id="3GQ7"/>
<dbReference type="PDBsum" id="3GQ8"/>
<dbReference type="PDBsum" id="3GQ9"/>
<dbReference type="PDBsum" id="3GQA"/>
<dbReference type="PDBsum" id="3GQH"/>
<dbReference type="PDBsum" id="3GQK"/>
<dbReference type="PDBsum" id="3SUC"/>
<dbReference type="PDBsum" id="6QZ9"/>
<dbReference type="PDBsum" id="6QZF"/>
<dbReference type="EMDB" id="EMD-4684"/>
<dbReference type="EMDB" id="EMD-4685"/>
<dbReference type="SMR" id="P20345"/>
<dbReference type="MEROPS" id="G02.001"/>
<dbReference type="KEGG" id="vg:6446499"/>
<dbReference type="EvolutionaryTrace" id="P20345"/>
<dbReference type="Proteomes" id="UP000001207">
    <property type="component" value="Genome"/>
</dbReference>
<dbReference type="GO" id="GO:0098024">
    <property type="term" value="C:virus tail, fiber"/>
    <property type="evidence" value="ECO:0007669"/>
    <property type="project" value="UniProtKB-KW"/>
</dbReference>
<dbReference type="GO" id="GO:0005524">
    <property type="term" value="F:ATP binding"/>
    <property type="evidence" value="ECO:0007669"/>
    <property type="project" value="UniProtKB-KW"/>
</dbReference>
<dbReference type="GO" id="GO:0046872">
    <property type="term" value="F:metal ion binding"/>
    <property type="evidence" value="ECO:0007669"/>
    <property type="project" value="UniProtKB-KW"/>
</dbReference>
<dbReference type="GO" id="GO:0098671">
    <property type="term" value="P:adhesion receptor-mediated virion attachment to host cell"/>
    <property type="evidence" value="ECO:0007669"/>
    <property type="project" value="UniProtKB-KW"/>
</dbReference>
<dbReference type="GO" id="GO:0098994">
    <property type="term" value="P:symbiont entry into host cell via disruption of host cell envelope"/>
    <property type="evidence" value="ECO:0007669"/>
    <property type="project" value="UniProtKB-KW"/>
</dbReference>
<dbReference type="GO" id="GO:0019062">
    <property type="term" value="P:virion attachment to host cell"/>
    <property type="evidence" value="ECO:0000314"/>
    <property type="project" value="UniProtKB"/>
</dbReference>
<dbReference type="FunFam" id="2.160.10.20:FF:000001">
    <property type="entry name" value="Pre-neck appendage protein"/>
    <property type="match status" value="1"/>
</dbReference>
<dbReference type="Gene3D" id="2.40.300.10">
    <property type="entry name" value="Head decoration protein D"/>
    <property type="match status" value="1"/>
</dbReference>
<dbReference type="Gene3D" id="2.160.10.20">
    <property type="entry name" value="Insect antifreeze protein"/>
    <property type="match status" value="1"/>
</dbReference>
<dbReference type="Gene3D" id="2.160.20.10">
    <property type="entry name" value="Single-stranded right-handed beta-helix, Pectin lyase-like"/>
    <property type="match status" value="1"/>
</dbReference>
<dbReference type="Gene3D" id="4.10.80.40">
    <property type="entry name" value="succinate dehydrogenase protein domain"/>
    <property type="match status" value="1"/>
</dbReference>
<dbReference type="InterPro" id="IPR006626">
    <property type="entry name" value="PbH1"/>
</dbReference>
<dbReference type="InterPro" id="IPR012334">
    <property type="entry name" value="Pectin_lyas_fold"/>
</dbReference>
<dbReference type="InterPro" id="IPR011050">
    <property type="entry name" value="Pectin_lyase_fold/virulence"/>
</dbReference>
<dbReference type="InterPro" id="IPR021865">
    <property type="entry name" value="Peptidase_G2"/>
</dbReference>
<dbReference type="InterPro" id="IPR024535">
    <property type="entry name" value="RHGA/B-epi-like_pectate_lyase"/>
</dbReference>
<dbReference type="Pfam" id="PF12708">
    <property type="entry name" value="Pect-lyase_RHGA_epim"/>
    <property type="match status" value="1"/>
</dbReference>
<dbReference type="Pfam" id="PF11962">
    <property type="entry name" value="Peptidase_G2"/>
    <property type="match status" value="1"/>
</dbReference>
<dbReference type="SMART" id="SM00710">
    <property type="entry name" value="PbH1"/>
    <property type="match status" value="6"/>
</dbReference>
<dbReference type="SUPFAM" id="SSF51126">
    <property type="entry name" value="Pectin lyase-like"/>
    <property type="match status" value="1"/>
</dbReference>
<name>FIB12_BPPH2</name>
<sequence>MSTKPELKRFEQFGEMMVQLYERYLPTAFDESLTLLEKMNKIIHYLNEIGKVTNELIEEWNKVMEWILNDGLEDLVKETLERWYEEGKFADLVIQVIDELKQFGVSVKTYGAKGDGVTDDIRAFEKAIESGFPVYVPYGTFMVSRGIKLPSNTVLTGAGKRNAVIKFMDSVGRGESLMYNQNVTTGNENIFLSSFTLDGNNKRLGQGISGIGGSRESNLSIRACHNVYIRDIEAVDCTLHGIDITCGGLDYPYLGDGTTAPNPSENIWIENCEATGFGDDGITTHHSQYINILNCYSHDPRLTANCNGFEIDDGSRHVVLSNNRSKGCYGGIEIKAHGDAPAAYNISINGHMSVEDVRSYNFRHIGHHAATDPQSVSAKNIVASNLVSIRPNNKRGFQDNATPRVLAVSAYYGVVINGLTGYTDDPNLLTETVVSVQFRARNCSLNGVGLTGFSNSDNGIYVIGGSRGGDAVNISNVTLNNSGRYGVSIGSGIENVSITNISGIGDGINSPVALVSTINSNPEISGLSSIGYPTAARVAGTDYNDGLTLFNGAFRASTTSSGKIHSEGFIMGSTSGCEASVSKSGVLTSSSSKTSSERSLIAGSSTSEAKGTYNTILGSLGAVADEQFAALISASQSRASGNHNLILSSYGINTTGSYKVNGGFEKINWELDSLNGRIKARDTVTGGNTWSDFAEYFESLDGQVIETGYLVTLEKGKIRKAEKGEKIIGVISETAGFVLGESSFEWQGAVLKNEFGGIIYEEVTTEDGVKFKRPLPSPDFDPNKNYIPRSQRREWHVVGLLGQIAVRIDETVKQGHGIDAVGGVATDGDNFIVQEITTPYTKEKGYGVAIVLVK</sequence>
<evidence type="ECO:0000269" key="1">
    <source>
    </source>
</evidence>
<evidence type="ECO:0000269" key="2">
    <source>
    </source>
</evidence>
<evidence type="ECO:0000269" key="3">
    <source>
    </source>
</evidence>
<evidence type="ECO:0000303" key="4">
    <source>
    </source>
</evidence>
<evidence type="ECO:0000305" key="5"/>
<evidence type="ECO:0000305" key="6">
    <source>
    </source>
</evidence>
<evidence type="ECO:0007744" key="7">
    <source>
        <dbReference type="PDB" id="3GQ7"/>
    </source>
</evidence>
<evidence type="ECO:0007744" key="8">
    <source>
        <dbReference type="PDB" id="3GQ8"/>
    </source>
</evidence>
<evidence type="ECO:0007744" key="9">
    <source>
        <dbReference type="PDB" id="3GQ9"/>
    </source>
</evidence>
<evidence type="ECO:0007744" key="10">
    <source>
        <dbReference type="PDB" id="3GQA"/>
    </source>
</evidence>
<evidence type="ECO:0007744" key="11">
    <source>
        <dbReference type="PDB" id="3GQH"/>
    </source>
</evidence>
<evidence type="ECO:0007744" key="12">
    <source>
        <dbReference type="PDB" id="3GQK"/>
    </source>
</evidence>
<evidence type="ECO:0007744" key="13">
    <source>
        <dbReference type="PDB" id="3SUC"/>
    </source>
</evidence>
<evidence type="ECO:0007829" key="14">
    <source>
        <dbReference type="PDB" id="3GQ8"/>
    </source>
</evidence>
<evidence type="ECO:0007829" key="15">
    <source>
        <dbReference type="PDB" id="3GQ9"/>
    </source>
</evidence>
<evidence type="ECO:0007829" key="16">
    <source>
        <dbReference type="PDB" id="3GQH"/>
    </source>
</evidence>
<evidence type="ECO:0007829" key="17">
    <source>
        <dbReference type="PDB" id="3GQK"/>
    </source>
</evidence>
<evidence type="ECO:0007829" key="18">
    <source>
        <dbReference type="PDB" id="3SUC"/>
    </source>
</evidence>
<reference key="1">
    <citation type="journal article" date="1986" name="Gene">
        <title>Nucleotide sequence of the late region of Bacillus phage phi 29 completes the 19,285-bp sequence of phi 29 genome. Comparison with the homologous sequence of phage PZA.</title>
        <authorList>
            <person name="Vlcek C."/>
            <person name="Paces V."/>
        </authorList>
    </citation>
    <scope>NUCLEOTIDE SEQUENCE [GENOMIC DNA]</scope>
</reference>
<reference key="2">
    <citation type="submission" date="2008-05" db="EMBL/GenBank/DDBJ databases">
        <authorList>
            <person name="Villegas A.P."/>
            <person name="Lingohr E.J."/>
            <person name="Ceyssens P.-J."/>
            <person name="Kropinski A.M."/>
        </authorList>
    </citation>
    <scope>NUCLEOTIDE SEQUENCE [GENOMIC DNA]</scope>
</reference>
<reference key="3">
    <citation type="journal article" date="1981" name="J. Virol.">
        <title>Adsorption of bacteriophage phi 29 to Bacillus subtilis through the neck appendages of the viral particle.</title>
        <authorList>
            <person name="Villanueva N."/>
            <person name="Salas M."/>
        </authorList>
    </citation>
    <scope>FUNCTION</scope>
</reference>
<reference key="4">
    <citation type="journal article" date="2001" name="J. Struct. Biol.">
        <title>Composition and mass of the bacteriophage phi29 prohead and virion.</title>
        <authorList>
            <person name="Peterson C."/>
            <person name="Simon M."/>
            <person name="Hodges J."/>
            <person name="Mertens P."/>
            <person name="Higgins L."/>
            <person name="Egelman E."/>
            <person name="Anderson D."/>
        </authorList>
    </citation>
    <scope>SUBCELLULAR LOCATION</scope>
</reference>
<reference evidence="7 8 9 10 11 12 13" key="5">
    <citation type="journal article" date="2009" name="Mol. Cell">
        <title>Crystallographic insights into the autocatalytic assembly mechanism of a bacteriophage tail spike.</title>
        <authorList>
            <person name="Xiang Y."/>
            <person name="Leiman P.G."/>
            <person name="Li L."/>
            <person name="Grimes S."/>
            <person name="Anderson D.L."/>
            <person name="Rossmann M.G."/>
        </authorList>
    </citation>
    <scope>X-RAY CRYSTALLOGRAPHY (1.80 ANGSTROMS) OF 692-854 IN COMPLEX WITH ATP AND MAGNESIUM</scope>
    <scope>SUBUNIT</scope>
    <scope>CLEAVAGE</scope>
    <scope>DOMAIN</scope>
    <scope>MUTAGENESIS OF GLU-695</scope>
    <scope>ACTIVE SITE</scope>
    <scope>SUBCELLULAR LOCATION</scope>
    <scope>COFACTOR</scope>
</reference>
<organismHost>
    <name type="scientific">Bacillus subtilis</name>
    <dbReference type="NCBI Taxonomy" id="1423"/>
</organismHost>
<keyword id="KW-0002">3D-structure</keyword>
<keyword id="KW-0067">ATP-binding</keyword>
<keyword id="KW-1235">Degradation of host cell envelope components during virus entry</keyword>
<keyword id="KW-0945">Host-virus interaction</keyword>
<keyword id="KW-0426">Late protein</keyword>
<keyword id="KW-0460">Magnesium</keyword>
<keyword id="KW-0479">Metal-binding</keyword>
<keyword id="KW-0547">Nucleotide-binding</keyword>
<keyword id="KW-1185">Reference proteome</keyword>
<keyword id="KW-0677">Repeat</keyword>
<keyword id="KW-1233">Viral attachment to host adhesion receptor</keyword>
<keyword id="KW-1161">Viral attachment to host cell</keyword>
<keyword id="KW-1230">Viral tail fiber protein</keyword>
<keyword id="KW-1227">Viral tail protein</keyword>
<keyword id="KW-0946">Virion</keyword>
<keyword id="KW-1160">Virus entry into host cell</keyword>
<gene>
    <name type="primary">12</name>
</gene>
<proteinExistence type="evidence at protein level"/>